<proteinExistence type="inferred from homology"/>
<sequence length="381" mass="42769">MTNLRKTHPLMKIVNHSFIDLPAPSNISAWWNFGSLLGVCLMIQILTGLFLAMHYTSDTLTAFSSVAHICRDVNYGWLIRNLHANGASMFFMCLFLHVGRGIYYGSYLYKETWNIGVILLLTLMATAFVGYVLPWGQMSFWGATVITNLLSAIPYIGTTLAEWIWGSFAVDKATLTQFFAFHFILPFIITALVIVHLLFLHETGSNNPSGINPDSDKIPFHPYYTIKDALGLMFLLLTLLTLALFSPDSLGDPDNFSPANPLNTSPHIKPEWYFLFAYAILQSIPSQLGGVLALLASILIPLIIPFLHTANQRSMMFRPISQTLLWILTANLITLTWIGGQPVEQPFIIIGQLASILYFMLILVLMPLAGLFENYMLKPKW</sequence>
<geneLocation type="mitochondrion"/>
<accession>Q35533</accession>
<organism>
    <name type="scientific">Planigale maculata sinualis</name>
    <name type="common">Common planigale</name>
    <dbReference type="NCBI Taxonomy" id="34893"/>
    <lineage>
        <taxon>Eukaryota</taxon>
        <taxon>Metazoa</taxon>
        <taxon>Chordata</taxon>
        <taxon>Craniata</taxon>
        <taxon>Vertebrata</taxon>
        <taxon>Euteleostomi</taxon>
        <taxon>Mammalia</taxon>
        <taxon>Metatheria</taxon>
        <taxon>Dasyuromorphia</taxon>
        <taxon>Dasyuridae</taxon>
        <taxon>Planigale</taxon>
    </lineage>
</organism>
<evidence type="ECO:0000250" key="1"/>
<evidence type="ECO:0000250" key="2">
    <source>
        <dbReference type="UniProtKB" id="P00157"/>
    </source>
</evidence>
<evidence type="ECO:0000255" key="3">
    <source>
        <dbReference type="PROSITE-ProRule" id="PRU00967"/>
    </source>
</evidence>
<evidence type="ECO:0000255" key="4">
    <source>
        <dbReference type="PROSITE-ProRule" id="PRU00968"/>
    </source>
</evidence>
<protein>
    <recommendedName>
        <fullName>Cytochrome b</fullName>
    </recommendedName>
    <alternativeName>
        <fullName>Complex III subunit 3</fullName>
    </alternativeName>
    <alternativeName>
        <fullName>Complex III subunit III</fullName>
    </alternativeName>
    <alternativeName>
        <fullName>Cytochrome b-c1 complex subunit 3</fullName>
    </alternativeName>
    <alternativeName>
        <fullName>Ubiquinol-cytochrome-c reductase complex cytochrome b subunit</fullName>
    </alternativeName>
</protein>
<comment type="function">
    <text evidence="2">Component of the ubiquinol-cytochrome c reductase complex (complex III or cytochrome b-c1 complex) that is part of the mitochondrial respiratory chain. The b-c1 complex mediates electron transfer from ubiquinol to cytochrome c. Contributes to the generation of a proton gradient across the mitochondrial membrane that is then used for ATP synthesis.</text>
</comment>
<comment type="cofactor">
    <cofactor evidence="2">
        <name>heme b</name>
        <dbReference type="ChEBI" id="CHEBI:60344"/>
    </cofactor>
    <text evidence="2">Binds 2 heme b groups non-covalently.</text>
</comment>
<comment type="subunit">
    <text evidence="2">The cytochrome bc1 complex contains 11 subunits: 3 respiratory subunits (MT-CYB, CYC1 and UQCRFS1), 2 core proteins (UQCRC1 and UQCRC2) and 6 low-molecular weight proteins (UQCRH/QCR6, UQCRB/QCR7, UQCRQ/QCR8, UQCR10/QCR9, UQCR11/QCR10 and a cleavage product of UQCRFS1). This cytochrome bc1 complex then forms a dimer.</text>
</comment>
<comment type="subcellular location">
    <subcellularLocation>
        <location evidence="2">Mitochondrion inner membrane</location>
        <topology evidence="2">Multi-pass membrane protein</topology>
    </subcellularLocation>
</comment>
<comment type="miscellaneous">
    <text evidence="1">Heme 1 (or BL or b562) is low-potential and absorbs at about 562 nm, and heme 2 (or BH or b566) is high-potential and absorbs at about 566 nm.</text>
</comment>
<comment type="similarity">
    <text evidence="3 4">Belongs to the cytochrome b family.</text>
</comment>
<comment type="caution">
    <text evidence="2">The full-length protein contains only eight transmembrane helices, not nine as predicted by bioinformatics tools.</text>
</comment>
<gene>
    <name type="primary">MT-CYB</name>
    <name type="synonym">COB</name>
    <name type="synonym">CYTB</name>
    <name type="synonym">MTCYB</name>
</gene>
<dbReference type="EMBL" id="U10318">
    <property type="protein sequence ID" value="AAB91487.1"/>
    <property type="molecule type" value="Genomic_DNA"/>
</dbReference>
<dbReference type="SMR" id="Q35533"/>
<dbReference type="GO" id="GO:0005743">
    <property type="term" value="C:mitochondrial inner membrane"/>
    <property type="evidence" value="ECO:0007669"/>
    <property type="project" value="UniProtKB-SubCell"/>
</dbReference>
<dbReference type="GO" id="GO:0045275">
    <property type="term" value="C:respiratory chain complex III"/>
    <property type="evidence" value="ECO:0007669"/>
    <property type="project" value="InterPro"/>
</dbReference>
<dbReference type="GO" id="GO:0046872">
    <property type="term" value="F:metal ion binding"/>
    <property type="evidence" value="ECO:0007669"/>
    <property type="project" value="UniProtKB-KW"/>
</dbReference>
<dbReference type="GO" id="GO:0008121">
    <property type="term" value="F:ubiquinol-cytochrome-c reductase activity"/>
    <property type="evidence" value="ECO:0007669"/>
    <property type="project" value="InterPro"/>
</dbReference>
<dbReference type="GO" id="GO:0006122">
    <property type="term" value="P:mitochondrial electron transport, ubiquinol to cytochrome c"/>
    <property type="evidence" value="ECO:0007669"/>
    <property type="project" value="TreeGrafter"/>
</dbReference>
<dbReference type="CDD" id="cd00290">
    <property type="entry name" value="cytochrome_b_C"/>
    <property type="match status" value="1"/>
</dbReference>
<dbReference type="CDD" id="cd00284">
    <property type="entry name" value="Cytochrome_b_N"/>
    <property type="match status" value="1"/>
</dbReference>
<dbReference type="FunFam" id="1.20.810.10:FF:000002">
    <property type="entry name" value="Cytochrome b"/>
    <property type="match status" value="1"/>
</dbReference>
<dbReference type="Gene3D" id="1.20.810.10">
    <property type="entry name" value="Cytochrome Bc1 Complex, Chain C"/>
    <property type="match status" value="1"/>
</dbReference>
<dbReference type="InterPro" id="IPR005798">
    <property type="entry name" value="Cyt_b/b6_C"/>
</dbReference>
<dbReference type="InterPro" id="IPR036150">
    <property type="entry name" value="Cyt_b/b6_C_sf"/>
</dbReference>
<dbReference type="InterPro" id="IPR005797">
    <property type="entry name" value="Cyt_b/b6_N"/>
</dbReference>
<dbReference type="InterPro" id="IPR027387">
    <property type="entry name" value="Cytb/b6-like_sf"/>
</dbReference>
<dbReference type="InterPro" id="IPR030689">
    <property type="entry name" value="Cytochrome_b"/>
</dbReference>
<dbReference type="InterPro" id="IPR048260">
    <property type="entry name" value="Cytochrome_b_C_euk/bac"/>
</dbReference>
<dbReference type="InterPro" id="IPR048259">
    <property type="entry name" value="Cytochrome_b_N_euk/bac"/>
</dbReference>
<dbReference type="InterPro" id="IPR016174">
    <property type="entry name" value="Di-haem_cyt_TM"/>
</dbReference>
<dbReference type="PANTHER" id="PTHR19271">
    <property type="entry name" value="CYTOCHROME B"/>
    <property type="match status" value="1"/>
</dbReference>
<dbReference type="PANTHER" id="PTHR19271:SF16">
    <property type="entry name" value="CYTOCHROME B"/>
    <property type="match status" value="1"/>
</dbReference>
<dbReference type="Pfam" id="PF00032">
    <property type="entry name" value="Cytochrom_B_C"/>
    <property type="match status" value="1"/>
</dbReference>
<dbReference type="Pfam" id="PF00033">
    <property type="entry name" value="Cytochrome_B"/>
    <property type="match status" value="1"/>
</dbReference>
<dbReference type="PIRSF" id="PIRSF038885">
    <property type="entry name" value="COB"/>
    <property type="match status" value="1"/>
</dbReference>
<dbReference type="SUPFAM" id="SSF81648">
    <property type="entry name" value="a domain/subunit of cytochrome bc1 complex (Ubiquinol-cytochrome c reductase)"/>
    <property type="match status" value="1"/>
</dbReference>
<dbReference type="SUPFAM" id="SSF81342">
    <property type="entry name" value="Transmembrane di-heme cytochromes"/>
    <property type="match status" value="1"/>
</dbReference>
<dbReference type="PROSITE" id="PS51003">
    <property type="entry name" value="CYTB_CTER"/>
    <property type="match status" value="1"/>
</dbReference>
<dbReference type="PROSITE" id="PS51002">
    <property type="entry name" value="CYTB_NTER"/>
    <property type="match status" value="1"/>
</dbReference>
<name>CYB_PLAMS</name>
<reference key="1">
    <citation type="journal article" date="1997" name="Mol. Phylogenet. Evol.">
        <title>A multigene assessment of phylogenetic relationships within the dasyurid marsupial subfamily Sminthopsinae.</title>
        <authorList>
            <person name="Krajewski C."/>
            <person name="Blacket M."/>
            <person name="Buckley L."/>
            <person name="Westerman M."/>
        </authorList>
    </citation>
    <scope>NUCLEOTIDE SEQUENCE [GENOMIC DNA]</scope>
</reference>
<keyword id="KW-0249">Electron transport</keyword>
<keyword id="KW-0349">Heme</keyword>
<keyword id="KW-0408">Iron</keyword>
<keyword id="KW-0472">Membrane</keyword>
<keyword id="KW-0479">Metal-binding</keyword>
<keyword id="KW-0496">Mitochondrion</keyword>
<keyword id="KW-0999">Mitochondrion inner membrane</keyword>
<keyword id="KW-0679">Respiratory chain</keyword>
<keyword id="KW-0812">Transmembrane</keyword>
<keyword id="KW-1133">Transmembrane helix</keyword>
<keyword id="KW-0813">Transport</keyword>
<keyword id="KW-0830">Ubiquinone</keyword>
<feature type="chain" id="PRO_0000061414" description="Cytochrome b">
    <location>
        <begin position="1"/>
        <end position="381"/>
    </location>
</feature>
<feature type="transmembrane region" description="Helical" evidence="2">
    <location>
        <begin position="33"/>
        <end position="53"/>
    </location>
</feature>
<feature type="transmembrane region" description="Helical" evidence="2">
    <location>
        <begin position="77"/>
        <end position="98"/>
    </location>
</feature>
<feature type="transmembrane region" description="Helical" evidence="2">
    <location>
        <begin position="113"/>
        <end position="133"/>
    </location>
</feature>
<feature type="transmembrane region" description="Helical" evidence="2">
    <location>
        <begin position="178"/>
        <end position="198"/>
    </location>
</feature>
<feature type="transmembrane region" description="Helical" evidence="2">
    <location>
        <begin position="226"/>
        <end position="246"/>
    </location>
</feature>
<feature type="transmembrane region" description="Helical" evidence="2">
    <location>
        <begin position="288"/>
        <end position="308"/>
    </location>
</feature>
<feature type="transmembrane region" description="Helical" evidence="2">
    <location>
        <begin position="320"/>
        <end position="340"/>
    </location>
</feature>
<feature type="transmembrane region" description="Helical" evidence="2">
    <location>
        <begin position="347"/>
        <end position="367"/>
    </location>
</feature>
<feature type="binding site" description="axial binding residue" evidence="2">
    <location>
        <position position="83"/>
    </location>
    <ligand>
        <name>heme b</name>
        <dbReference type="ChEBI" id="CHEBI:60344"/>
        <label>b562</label>
    </ligand>
    <ligandPart>
        <name>Fe</name>
        <dbReference type="ChEBI" id="CHEBI:18248"/>
    </ligandPart>
</feature>
<feature type="binding site" description="axial binding residue" evidence="2">
    <location>
        <position position="97"/>
    </location>
    <ligand>
        <name>heme b</name>
        <dbReference type="ChEBI" id="CHEBI:60344"/>
        <label>b566</label>
    </ligand>
    <ligandPart>
        <name>Fe</name>
        <dbReference type="ChEBI" id="CHEBI:18248"/>
    </ligandPart>
</feature>
<feature type="binding site" description="axial binding residue" evidence="2">
    <location>
        <position position="182"/>
    </location>
    <ligand>
        <name>heme b</name>
        <dbReference type="ChEBI" id="CHEBI:60344"/>
        <label>b562</label>
    </ligand>
    <ligandPart>
        <name>Fe</name>
        <dbReference type="ChEBI" id="CHEBI:18248"/>
    </ligandPart>
</feature>
<feature type="binding site" description="axial binding residue" evidence="2">
    <location>
        <position position="196"/>
    </location>
    <ligand>
        <name>heme b</name>
        <dbReference type="ChEBI" id="CHEBI:60344"/>
        <label>b566</label>
    </ligand>
    <ligandPart>
        <name>Fe</name>
        <dbReference type="ChEBI" id="CHEBI:18248"/>
    </ligandPart>
</feature>
<feature type="binding site" evidence="2">
    <location>
        <position position="201"/>
    </location>
    <ligand>
        <name>a ubiquinone</name>
        <dbReference type="ChEBI" id="CHEBI:16389"/>
    </ligand>
</feature>